<organism>
    <name type="scientific">Arabidopsis thaliana</name>
    <name type="common">Mouse-ear cress</name>
    <dbReference type="NCBI Taxonomy" id="3702"/>
    <lineage>
        <taxon>Eukaryota</taxon>
        <taxon>Viridiplantae</taxon>
        <taxon>Streptophyta</taxon>
        <taxon>Embryophyta</taxon>
        <taxon>Tracheophyta</taxon>
        <taxon>Spermatophyta</taxon>
        <taxon>Magnoliopsida</taxon>
        <taxon>eudicotyledons</taxon>
        <taxon>Gunneridae</taxon>
        <taxon>Pentapetalae</taxon>
        <taxon>rosids</taxon>
        <taxon>malvids</taxon>
        <taxon>Brassicales</taxon>
        <taxon>Brassicaceae</taxon>
        <taxon>Camelineae</taxon>
        <taxon>Arabidopsis</taxon>
    </lineage>
</organism>
<evidence type="ECO:0000303" key="1">
    <source>
    </source>
</evidence>
<evidence type="ECO:0000305" key="2"/>
<keyword id="KW-0963">Cytoplasm</keyword>
<keyword id="KW-1185">Reference proteome</keyword>
<keyword id="KW-0687">Ribonucleoprotein</keyword>
<keyword id="KW-0689">Ribosomal protein</keyword>
<keyword id="KW-0694">RNA-binding</keyword>
<keyword id="KW-0699">rRNA-binding</keyword>
<dbReference type="EMBL" id="J05216">
    <property type="protein sequence ID" value="AAA32866.1"/>
    <property type="status" value="ALT_INIT"/>
    <property type="molecule type" value="mRNA"/>
</dbReference>
<dbReference type="EMBL" id="L28828">
    <property type="protein sequence ID" value="AAC14454.1"/>
    <property type="molecule type" value="Genomic_DNA"/>
</dbReference>
<dbReference type="EMBL" id="AL132967">
    <property type="protein sequence ID" value="CAB62017.1"/>
    <property type="molecule type" value="Genomic_DNA"/>
</dbReference>
<dbReference type="EMBL" id="CP002686">
    <property type="protein sequence ID" value="AEE78474.1"/>
    <property type="molecule type" value="Genomic_DNA"/>
</dbReference>
<dbReference type="EMBL" id="AY059947">
    <property type="protein sequence ID" value="AAL24429.1"/>
    <property type="molecule type" value="mRNA"/>
</dbReference>
<dbReference type="EMBL" id="AY081614">
    <property type="protein sequence ID" value="AAM10176.1"/>
    <property type="molecule type" value="mRNA"/>
</dbReference>
<dbReference type="EMBL" id="AY088032">
    <property type="protein sequence ID" value="AAM65578.1"/>
    <property type="molecule type" value="mRNA"/>
</dbReference>
<dbReference type="PIR" id="C35542">
    <property type="entry name" value="C35542"/>
</dbReference>
<dbReference type="RefSeq" id="NP_190462.1">
    <property type="nucleotide sequence ID" value="NM_114752.3"/>
</dbReference>
<dbReference type="SMR" id="P16181"/>
<dbReference type="BioGRID" id="9372">
    <property type="interactions" value="179"/>
</dbReference>
<dbReference type="FunCoup" id="P16181">
    <property type="interactions" value="3527"/>
</dbReference>
<dbReference type="IntAct" id="P16181">
    <property type="interactions" value="4"/>
</dbReference>
<dbReference type="STRING" id="3702.P16181"/>
<dbReference type="iPTMnet" id="P16181"/>
<dbReference type="PaxDb" id="3702-AT3G48930.1"/>
<dbReference type="ProteomicsDB" id="228080"/>
<dbReference type="EnsemblPlants" id="AT3G48930.1">
    <property type="protein sequence ID" value="AT3G48930.1"/>
    <property type="gene ID" value="AT3G48930"/>
</dbReference>
<dbReference type="GeneID" id="824054"/>
<dbReference type="Gramene" id="AT3G48930.1">
    <property type="protein sequence ID" value="AT3G48930.1"/>
    <property type="gene ID" value="AT3G48930"/>
</dbReference>
<dbReference type="KEGG" id="ath:AT3G48930"/>
<dbReference type="Araport" id="AT3G48930"/>
<dbReference type="TAIR" id="AT3G48930">
    <property type="gene designation" value="EMB1080"/>
</dbReference>
<dbReference type="eggNOG" id="KOG1728">
    <property type="taxonomic scope" value="Eukaryota"/>
</dbReference>
<dbReference type="HOGENOM" id="CLU_073626_0_2_1"/>
<dbReference type="InParanoid" id="P16181"/>
<dbReference type="OMA" id="KVGECWP"/>
<dbReference type="OrthoDB" id="1890621at2759"/>
<dbReference type="PhylomeDB" id="P16181"/>
<dbReference type="PRO" id="PR:P16181"/>
<dbReference type="Proteomes" id="UP000006548">
    <property type="component" value="Chromosome 3"/>
</dbReference>
<dbReference type="ExpressionAtlas" id="P16181">
    <property type="expression patterns" value="baseline and differential"/>
</dbReference>
<dbReference type="GO" id="GO:0005829">
    <property type="term" value="C:cytosol"/>
    <property type="evidence" value="ECO:0007005"/>
    <property type="project" value="TAIR"/>
</dbReference>
<dbReference type="GO" id="GO:0022626">
    <property type="term" value="C:cytosolic ribosome"/>
    <property type="evidence" value="ECO:0007005"/>
    <property type="project" value="TAIR"/>
</dbReference>
<dbReference type="GO" id="GO:0022627">
    <property type="term" value="C:cytosolic small ribosomal subunit"/>
    <property type="evidence" value="ECO:0007005"/>
    <property type="project" value="TAIR"/>
</dbReference>
<dbReference type="GO" id="GO:0009505">
    <property type="term" value="C:plant-type cell wall"/>
    <property type="evidence" value="ECO:0007005"/>
    <property type="project" value="TAIR"/>
</dbReference>
<dbReference type="GO" id="GO:0009506">
    <property type="term" value="C:plasmodesma"/>
    <property type="evidence" value="ECO:0007005"/>
    <property type="project" value="TAIR"/>
</dbReference>
<dbReference type="GO" id="GO:0003729">
    <property type="term" value="F:mRNA binding"/>
    <property type="evidence" value="ECO:0000314"/>
    <property type="project" value="TAIR"/>
</dbReference>
<dbReference type="GO" id="GO:0019843">
    <property type="term" value="F:rRNA binding"/>
    <property type="evidence" value="ECO:0007669"/>
    <property type="project" value="UniProtKB-KW"/>
</dbReference>
<dbReference type="GO" id="GO:0003735">
    <property type="term" value="F:structural constituent of ribosome"/>
    <property type="evidence" value="ECO:0000314"/>
    <property type="project" value="CAFA"/>
</dbReference>
<dbReference type="GO" id="GO:0006412">
    <property type="term" value="P:translation"/>
    <property type="evidence" value="ECO:0007669"/>
    <property type="project" value="InterPro"/>
</dbReference>
<dbReference type="CDD" id="cd00364">
    <property type="entry name" value="Ribosomal_uS17"/>
    <property type="match status" value="1"/>
</dbReference>
<dbReference type="FunFam" id="2.40.50.1000:FF:000003">
    <property type="entry name" value="40S ribosomal protein S11"/>
    <property type="match status" value="1"/>
</dbReference>
<dbReference type="Gene3D" id="2.40.50.1000">
    <property type="match status" value="1"/>
</dbReference>
<dbReference type="InterPro" id="IPR012340">
    <property type="entry name" value="NA-bd_OB-fold"/>
</dbReference>
<dbReference type="InterPro" id="IPR000266">
    <property type="entry name" value="Ribosomal_uS17"/>
</dbReference>
<dbReference type="InterPro" id="IPR028333">
    <property type="entry name" value="Ribosomal_uS17_arc/euk"/>
</dbReference>
<dbReference type="InterPro" id="IPR019979">
    <property type="entry name" value="Ribosomal_uS17_CS"/>
</dbReference>
<dbReference type="InterPro" id="IPR032440">
    <property type="entry name" value="Ribosomal_uS17_N"/>
</dbReference>
<dbReference type="NCBIfam" id="NF006345">
    <property type="entry name" value="PRK08572.1"/>
    <property type="match status" value="1"/>
</dbReference>
<dbReference type="NCBIfam" id="TIGR03630">
    <property type="entry name" value="uS17_arch"/>
    <property type="match status" value="1"/>
</dbReference>
<dbReference type="PANTHER" id="PTHR10744">
    <property type="entry name" value="40S RIBOSOMAL PROTEIN S11 FAMILY MEMBER"/>
    <property type="match status" value="1"/>
</dbReference>
<dbReference type="PANTHER" id="PTHR10744:SF47">
    <property type="entry name" value="SMALL RIBOSOMAL SUBUNIT PROTEIN US17X-RELATED"/>
    <property type="match status" value="1"/>
</dbReference>
<dbReference type="Pfam" id="PF00366">
    <property type="entry name" value="Ribosomal_S17"/>
    <property type="match status" value="1"/>
</dbReference>
<dbReference type="Pfam" id="PF16205">
    <property type="entry name" value="Ribosomal_S17_N"/>
    <property type="match status" value="1"/>
</dbReference>
<dbReference type="PRINTS" id="PR00973">
    <property type="entry name" value="RIBOSOMALS17"/>
</dbReference>
<dbReference type="SUPFAM" id="SSF50249">
    <property type="entry name" value="Nucleic acid-binding proteins"/>
    <property type="match status" value="1"/>
</dbReference>
<dbReference type="PROSITE" id="PS00056">
    <property type="entry name" value="RIBOSOMAL_S17"/>
    <property type="match status" value="1"/>
</dbReference>
<accession>P16181</accession>
<sequence length="160" mass="17957">MAEQTEKAFLKQPKVFLSSKKSGKGKRPGKGGNRFWKNIGLGFKTPREAIDGAYVDKKCPFTGTVSIRGRILAGTCHSAKMQRTIIVRRDYLHFVKKYQRYEKRHSNIPAHVSPCFRVKEGDHIIIGQCRPLSKTVRFNVLKVIPAGSSSSFGKKAFTGM</sequence>
<proteinExistence type="evidence at transcript level"/>
<gene>
    <name type="primary">RPS11A</name>
    <name type="synonym">EMB1080</name>
    <name type="synonym">RPS11</name>
    <name type="ordered locus">At3g48930</name>
    <name type="ORF">T2J13.230</name>
</gene>
<protein>
    <recommendedName>
        <fullName evidence="1">Small ribosomal subunit protein uS17z</fullName>
    </recommendedName>
    <alternativeName>
        <fullName>40S ribosomal protein S11-1</fullName>
    </alternativeName>
    <alternativeName>
        <fullName>Protein EMBRYO DEFECTIVE 1080</fullName>
    </alternativeName>
</protein>
<reference key="1">
    <citation type="journal article" date="1990" name="J. Biol. Chem.">
        <title>Plant cytosolic ribosomal protein S11 and chloroplast ribosomal protein CS17. Their primary structures and evolutionary relationships.</title>
        <authorList>
            <person name="Gantt J.S."/>
            <person name="Thompson M.D."/>
        </authorList>
    </citation>
    <scope>NUCLEOTIDE SEQUENCE [MRNA]</scope>
</reference>
<reference key="2">
    <citation type="journal article" date="1994" name="Plant Physiol.">
        <title>Ribosomal protein S11 genes from Arabidopsis and soybean.</title>
        <authorList>
            <person name="Lenvik T.R."/>
            <person name="Key J.L."/>
            <person name="Gantt J.S."/>
        </authorList>
    </citation>
    <scope>NUCLEOTIDE SEQUENCE [GENOMIC DNA]</scope>
    <source>
        <strain>cv. Columbia</strain>
    </source>
</reference>
<reference key="3">
    <citation type="journal article" date="2000" name="Nature">
        <title>Sequence and analysis of chromosome 3 of the plant Arabidopsis thaliana.</title>
        <authorList>
            <person name="Salanoubat M."/>
            <person name="Lemcke K."/>
            <person name="Rieger M."/>
            <person name="Ansorge W."/>
            <person name="Unseld M."/>
            <person name="Fartmann B."/>
            <person name="Valle G."/>
            <person name="Bloecker H."/>
            <person name="Perez-Alonso M."/>
            <person name="Obermaier B."/>
            <person name="Delseny M."/>
            <person name="Boutry M."/>
            <person name="Grivell L.A."/>
            <person name="Mache R."/>
            <person name="Puigdomenech P."/>
            <person name="De Simone V."/>
            <person name="Choisne N."/>
            <person name="Artiguenave F."/>
            <person name="Robert C."/>
            <person name="Brottier P."/>
            <person name="Wincker P."/>
            <person name="Cattolico L."/>
            <person name="Weissenbach J."/>
            <person name="Saurin W."/>
            <person name="Quetier F."/>
            <person name="Schaefer M."/>
            <person name="Mueller-Auer S."/>
            <person name="Gabel C."/>
            <person name="Fuchs M."/>
            <person name="Benes V."/>
            <person name="Wurmbach E."/>
            <person name="Drzonek H."/>
            <person name="Erfle H."/>
            <person name="Jordan N."/>
            <person name="Bangert S."/>
            <person name="Wiedelmann R."/>
            <person name="Kranz H."/>
            <person name="Voss H."/>
            <person name="Holland R."/>
            <person name="Brandt P."/>
            <person name="Nyakatura G."/>
            <person name="Vezzi A."/>
            <person name="D'Angelo M."/>
            <person name="Pallavicini A."/>
            <person name="Toppo S."/>
            <person name="Simionati B."/>
            <person name="Conrad A."/>
            <person name="Hornischer K."/>
            <person name="Kauer G."/>
            <person name="Loehnert T.-H."/>
            <person name="Nordsiek G."/>
            <person name="Reichelt J."/>
            <person name="Scharfe M."/>
            <person name="Schoen O."/>
            <person name="Bargues M."/>
            <person name="Terol J."/>
            <person name="Climent J."/>
            <person name="Navarro P."/>
            <person name="Collado C."/>
            <person name="Perez-Perez A."/>
            <person name="Ottenwaelder B."/>
            <person name="Duchemin D."/>
            <person name="Cooke R."/>
            <person name="Laudie M."/>
            <person name="Berger-Llauro C."/>
            <person name="Purnelle B."/>
            <person name="Masuy D."/>
            <person name="de Haan M."/>
            <person name="Maarse A.C."/>
            <person name="Alcaraz J.-P."/>
            <person name="Cottet A."/>
            <person name="Casacuberta E."/>
            <person name="Monfort A."/>
            <person name="Argiriou A."/>
            <person name="Flores M."/>
            <person name="Liguori R."/>
            <person name="Vitale D."/>
            <person name="Mannhaupt G."/>
            <person name="Haase D."/>
            <person name="Schoof H."/>
            <person name="Rudd S."/>
            <person name="Zaccaria P."/>
            <person name="Mewes H.-W."/>
            <person name="Mayer K.F.X."/>
            <person name="Kaul S."/>
            <person name="Town C.D."/>
            <person name="Koo H.L."/>
            <person name="Tallon L.J."/>
            <person name="Jenkins J."/>
            <person name="Rooney T."/>
            <person name="Rizzo M."/>
            <person name="Walts A."/>
            <person name="Utterback T."/>
            <person name="Fujii C.Y."/>
            <person name="Shea T.P."/>
            <person name="Creasy T.H."/>
            <person name="Haas B."/>
            <person name="Maiti R."/>
            <person name="Wu D."/>
            <person name="Peterson J."/>
            <person name="Van Aken S."/>
            <person name="Pai G."/>
            <person name="Militscher J."/>
            <person name="Sellers P."/>
            <person name="Gill J.E."/>
            <person name="Feldblyum T.V."/>
            <person name="Preuss D."/>
            <person name="Lin X."/>
            <person name="Nierman W.C."/>
            <person name="Salzberg S.L."/>
            <person name="White O."/>
            <person name="Venter J.C."/>
            <person name="Fraser C.M."/>
            <person name="Kaneko T."/>
            <person name="Nakamura Y."/>
            <person name="Sato S."/>
            <person name="Kato T."/>
            <person name="Asamizu E."/>
            <person name="Sasamoto S."/>
            <person name="Kimura T."/>
            <person name="Idesawa K."/>
            <person name="Kawashima K."/>
            <person name="Kishida Y."/>
            <person name="Kiyokawa C."/>
            <person name="Kohara M."/>
            <person name="Matsumoto M."/>
            <person name="Matsuno A."/>
            <person name="Muraki A."/>
            <person name="Nakayama S."/>
            <person name="Nakazaki N."/>
            <person name="Shinpo S."/>
            <person name="Takeuchi C."/>
            <person name="Wada T."/>
            <person name="Watanabe A."/>
            <person name="Yamada M."/>
            <person name="Yasuda M."/>
            <person name="Tabata S."/>
        </authorList>
    </citation>
    <scope>NUCLEOTIDE SEQUENCE [LARGE SCALE GENOMIC DNA]</scope>
    <source>
        <strain>cv. Columbia</strain>
    </source>
</reference>
<reference key="4">
    <citation type="journal article" date="2017" name="Plant J.">
        <title>Araport11: a complete reannotation of the Arabidopsis thaliana reference genome.</title>
        <authorList>
            <person name="Cheng C.Y."/>
            <person name="Krishnakumar V."/>
            <person name="Chan A.P."/>
            <person name="Thibaud-Nissen F."/>
            <person name="Schobel S."/>
            <person name="Town C.D."/>
        </authorList>
    </citation>
    <scope>GENOME REANNOTATION</scope>
    <source>
        <strain>cv. Columbia</strain>
    </source>
</reference>
<reference key="5">
    <citation type="journal article" date="2003" name="Science">
        <title>Empirical analysis of transcriptional activity in the Arabidopsis genome.</title>
        <authorList>
            <person name="Yamada K."/>
            <person name="Lim J."/>
            <person name="Dale J.M."/>
            <person name="Chen H."/>
            <person name="Shinn P."/>
            <person name="Palm C.J."/>
            <person name="Southwick A.M."/>
            <person name="Wu H.C."/>
            <person name="Kim C.J."/>
            <person name="Nguyen M."/>
            <person name="Pham P.K."/>
            <person name="Cheuk R.F."/>
            <person name="Karlin-Newmann G."/>
            <person name="Liu S.X."/>
            <person name="Lam B."/>
            <person name="Sakano H."/>
            <person name="Wu T."/>
            <person name="Yu G."/>
            <person name="Miranda M."/>
            <person name="Quach H.L."/>
            <person name="Tripp M."/>
            <person name="Chang C.H."/>
            <person name="Lee J.M."/>
            <person name="Toriumi M.J."/>
            <person name="Chan M.M."/>
            <person name="Tang C.C."/>
            <person name="Onodera C.S."/>
            <person name="Deng J.M."/>
            <person name="Akiyama K."/>
            <person name="Ansari Y."/>
            <person name="Arakawa T."/>
            <person name="Banh J."/>
            <person name="Banno F."/>
            <person name="Bowser L."/>
            <person name="Brooks S.Y."/>
            <person name="Carninci P."/>
            <person name="Chao Q."/>
            <person name="Choy N."/>
            <person name="Enju A."/>
            <person name="Goldsmith A.D."/>
            <person name="Gurjal M."/>
            <person name="Hansen N.F."/>
            <person name="Hayashizaki Y."/>
            <person name="Johnson-Hopson C."/>
            <person name="Hsuan V.W."/>
            <person name="Iida K."/>
            <person name="Karnes M."/>
            <person name="Khan S."/>
            <person name="Koesema E."/>
            <person name="Ishida J."/>
            <person name="Jiang P.X."/>
            <person name="Jones T."/>
            <person name="Kawai J."/>
            <person name="Kamiya A."/>
            <person name="Meyers C."/>
            <person name="Nakajima M."/>
            <person name="Narusaka M."/>
            <person name="Seki M."/>
            <person name="Sakurai T."/>
            <person name="Satou M."/>
            <person name="Tamse R."/>
            <person name="Vaysberg M."/>
            <person name="Wallender E.K."/>
            <person name="Wong C."/>
            <person name="Yamamura Y."/>
            <person name="Yuan S."/>
            <person name="Shinozaki K."/>
            <person name="Davis R.W."/>
            <person name="Theologis A."/>
            <person name="Ecker J.R."/>
        </authorList>
    </citation>
    <scope>NUCLEOTIDE SEQUENCE [LARGE SCALE MRNA]</scope>
    <source>
        <strain>cv. Columbia</strain>
    </source>
</reference>
<reference key="6">
    <citation type="submission" date="2002-03" db="EMBL/GenBank/DDBJ databases">
        <title>Full-length cDNA from Arabidopsis thaliana.</title>
        <authorList>
            <person name="Brover V.V."/>
            <person name="Troukhan M.E."/>
            <person name="Alexandrov N.A."/>
            <person name="Lu Y.-P."/>
            <person name="Flavell R.B."/>
            <person name="Feldmann K.A."/>
        </authorList>
    </citation>
    <scope>NUCLEOTIDE SEQUENCE [LARGE SCALE MRNA]</scope>
</reference>
<reference key="7">
    <citation type="journal article" date="2001" name="Plant Physiol.">
        <title>The organization of cytoplasmic ribosomal protein genes in the Arabidopsis genome.</title>
        <authorList>
            <person name="Barakat A."/>
            <person name="Szick-Miranda K."/>
            <person name="Chang I.-F."/>
            <person name="Guyot R."/>
            <person name="Blanc G."/>
            <person name="Cooke R."/>
            <person name="Delseny M."/>
            <person name="Bailey-Serres J."/>
        </authorList>
    </citation>
    <scope>GENE FAMILY ORGANIZATION</scope>
    <scope>NOMENCLATURE</scope>
</reference>
<reference key="8">
    <citation type="journal article" date="2023" name="Plant Cell">
        <title>An updated nomenclature for plant ribosomal protein genes.</title>
        <authorList>
            <person name="Scarpin M.R."/>
            <person name="Busche M."/>
            <person name="Martinez R.E."/>
            <person name="Harper L.C."/>
            <person name="Reiser L."/>
            <person name="Szakonyi D."/>
            <person name="Merchante C."/>
            <person name="Lan T."/>
            <person name="Xiong W."/>
            <person name="Mo B."/>
            <person name="Tang G."/>
            <person name="Chen X."/>
            <person name="Bailey-Serres J."/>
            <person name="Browning K.S."/>
            <person name="Brunkard J.O."/>
        </authorList>
    </citation>
    <scope>NOMENCLATURE</scope>
</reference>
<name>RS111_ARATH</name>
<feature type="chain" id="PRO_0000128515" description="Small ribosomal subunit protein uS17z">
    <location>
        <begin position="1"/>
        <end position="160"/>
    </location>
</feature>
<comment type="subcellular location">
    <subcellularLocation>
        <location>Cytoplasm</location>
    </subcellularLocation>
</comment>
<comment type="similarity">
    <text evidence="2">Belongs to the universal ribosomal protein uS17 family.</text>
</comment>
<comment type="sequence caution" evidence="2">
    <conflict type="erroneous initiation">
        <sequence resource="EMBL-CDS" id="AAA32866"/>
    </conflict>
</comment>